<feature type="chain" id="PRO_0000255242" description="RNA-splicing ligase RtcB homolog">
    <location>
        <begin position="1"/>
        <end position="505"/>
    </location>
</feature>
<feature type="active site" description="GMP-histidine intermediate" evidence="3">
    <location>
        <position position="428"/>
    </location>
</feature>
<feature type="binding site" evidence="3">
    <location>
        <position position="119"/>
    </location>
    <ligand>
        <name>Mn(2+)</name>
        <dbReference type="ChEBI" id="CHEBI:29035"/>
        <label>1</label>
    </ligand>
</feature>
<feature type="binding site" evidence="3">
    <location>
        <position position="122"/>
    </location>
    <ligand>
        <name>Mn(2+)</name>
        <dbReference type="ChEBI" id="CHEBI:29035"/>
        <label>1</label>
    </ligand>
</feature>
<feature type="binding site" evidence="3">
    <location>
        <position position="122"/>
    </location>
    <ligand>
        <name>Mn(2+)</name>
        <dbReference type="ChEBI" id="CHEBI:29035"/>
        <label>2</label>
    </ligand>
</feature>
<feature type="binding site" evidence="3">
    <location>
        <begin position="226"/>
        <end position="230"/>
    </location>
    <ligand>
        <name>GMP</name>
        <dbReference type="ChEBI" id="CHEBI:58115"/>
    </ligand>
</feature>
<feature type="binding site" evidence="3">
    <location>
        <position position="227"/>
    </location>
    <ligand>
        <name>Mn(2+)</name>
        <dbReference type="ChEBI" id="CHEBI:29035"/>
        <label>1</label>
    </ligand>
</feature>
<feature type="binding site" evidence="3">
    <location>
        <position position="259"/>
    </location>
    <ligand>
        <name>Mn(2+)</name>
        <dbReference type="ChEBI" id="CHEBI:29035"/>
        <label>2</label>
    </ligand>
</feature>
<feature type="binding site" evidence="3">
    <location>
        <begin position="353"/>
        <end position="354"/>
    </location>
    <ligand>
        <name>GMP</name>
        <dbReference type="ChEBI" id="CHEBI:58115"/>
    </ligand>
</feature>
<feature type="binding site" evidence="3">
    <location>
        <position position="353"/>
    </location>
    <ligand>
        <name>Mn(2+)</name>
        <dbReference type="ChEBI" id="CHEBI:29035"/>
        <label>2</label>
    </ligand>
</feature>
<feature type="binding site" evidence="3">
    <location>
        <begin position="402"/>
        <end position="405"/>
    </location>
    <ligand>
        <name>GMP</name>
        <dbReference type="ChEBI" id="CHEBI:58115"/>
    </ligand>
</feature>
<feature type="binding site" evidence="3">
    <location>
        <position position="409"/>
    </location>
    <ligand>
        <name>GMP</name>
        <dbReference type="ChEBI" id="CHEBI:58115"/>
    </ligand>
</feature>
<feature type="binding site" evidence="3">
    <location>
        <begin position="428"/>
        <end position="431"/>
    </location>
    <ligand>
        <name>GMP</name>
        <dbReference type="ChEBI" id="CHEBI:58115"/>
    </ligand>
</feature>
<feature type="binding site" evidence="3">
    <location>
        <position position="504"/>
    </location>
    <ligand>
        <name>GMP</name>
        <dbReference type="ChEBI" id="CHEBI:58115"/>
    </ligand>
</feature>
<feature type="modified residue" description="Phosphoserine" evidence="2">
    <location>
        <position position="300"/>
    </location>
</feature>
<feature type="cross-link" description="Glycyl lysine isopeptide (Lys-Gly) (interchain with G-Cter in SUMO2)" evidence="2">
    <location>
        <position position="496"/>
    </location>
</feature>
<proteinExistence type="evidence at transcript level"/>
<sequence>MSRNYNDELQFLEKISKNCWRIKKGFVPNMQVEGVFYVNDALEKLMFEELRNACRGGGVGGFLPAMKQIGNVAALPGIVHRSIGLPDVHSGYGFAIGNMAAFDMNDSEAVVSPGGVGFDINCGVRLLRTNLDESDVQPVKEQLAQAMFDHIPVGVGSKGVIPMNAKDLEEALEMGVDWSLREGYAWAEDKEHCEEYGRMLQADPNKVSARAKKRGLPQLGTLGAGNHYAEIQVVDEIFNEYAAKKMGIDHKGQVCVMIHSGSRGLGHQVATDALVAMEKAMKRDKIIVNDRQLACARIASPEGQDYLKGMAAAGNYAWVNRSSMTFLTRQAFAKVFNTTPDDLDLHVIYDVSHNIAKVEQHVVDGKERTLLVHRKGSTRAFPPHHPLIAVDYQLTGQPVLIGGTMGTCSYVLTGTEQGMTETFGTTCHGAGRALSRAKSRRNLDFQDVLDKLADMGIAIRVASPKLVMEEAPESYKNVTDVVNTCHDAGISKKAIKLRPIAVIKG</sequence>
<protein>
    <recommendedName>
        <fullName evidence="3">RNA-splicing ligase RtcB homolog</fullName>
        <ecNumber evidence="3">6.5.1.8</ecNumber>
    </recommendedName>
    <alternativeName>
        <fullName evidence="3">3'-phosphate/5'-hydroxy nucleic acid ligase</fullName>
    </alternativeName>
</protein>
<keyword id="KW-0963">Cytoplasm</keyword>
<keyword id="KW-0342">GTP-binding</keyword>
<keyword id="KW-1017">Isopeptide bond</keyword>
<keyword id="KW-0436">Ligase</keyword>
<keyword id="KW-0464">Manganese</keyword>
<keyword id="KW-0479">Metal-binding</keyword>
<keyword id="KW-0547">Nucleotide-binding</keyword>
<keyword id="KW-0539">Nucleus</keyword>
<keyword id="KW-0597">Phosphoprotein</keyword>
<keyword id="KW-1185">Reference proteome</keyword>
<keyword id="KW-0819">tRNA processing</keyword>
<keyword id="KW-0832">Ubl conjugation</keyword>
<gene>
    <name evidence="3" type="primary">RTCB</name>
    <name type="ORF">QtsA-16939</name>
</gene>
<accession>Q4R6X4</accession>
<evidence type="ECO:0000250" key="1"/>
<evidence type="ECO:0000250" key="2">
    <source>
        <dbReference type="UniProtKB" id="Q9Y3I0"/>
    </source>
</evidence>
<evidence type="ECO:0000255" key="3">
    <source>
        <dbReference type="HAMAP-Rule" id="MF_03144"/>
    </source>
</evidence>
<dbReference type="EC" id="6.5.1.8" evidence="3"/>
<dbReference type="EMBL" id="AB169056">
    <property type="protein sequence ID" value="BAE01150.1"/>
    <property type="molecule type" value="mRNA"/>
</dbReference>
<dbReference type="RefSeq" id="NP_001274263.1">
    <property type="nucleotide sequence ID" value="NM_001287334.1"/>
</dbReference>
<dbReference type="RefSeq" id="XP_045220231.1">
    <property type="nucleotide sequence ID" value="XM_045364296.2"/>
</dbReference>
<dbReference type="SMR" id="Q4R6X4"/>
<dbReference type="STRING" id="9541.ENSMFAP00000036124"/>
<dbReference type="Ensembl" id="ENSMFAT00000075105.1">
    <property type="protein sequence ID" value="ENSMFAP00000064130.1"/>
    <property type="gene ID" value="ENSMFAG00000034419.2"/>
</dbReference>
<dbReference type="GeneID" id="102144880"/>
<dbReference type="VEuPathDB" id="HostDB:ENSMFAG00000034419"/>
<dbReference type="eggNOG" id="KOG3833">
    <property type="taxonomic scope" value="Eukaryota"/>
</dbReference>
<dbReference type="GeneTree" id="ENSGT00940000155911"/>
<dbReference type="OMA" id="QTRGVEC"/>
<dbReference type="Proteomes" id="UP000233100">
    <property type="component" value="Chromosome 10"/>
</dbReference>
<dbReference type="Bgee" id="ENSMFAG00000034419">
    <property type="expression patterns" value="Expressed in colon and 13 other cell types or tissues"/>
</dbReference>
<dbReference type="GO" id="GO:0005737">
    <property type="term" value="C:cytoplasm"/>
    <property type="evidence" value="ECO:0000250"/>
    <property type="project" value="UniProtKB"/>
</dbReference>
<dbReference type="GO" id="GO:0005829">
    <property type="term" value="C:cytosol"/>
    <property type="evidence" value="ECO:0007669"/>
    <property type="project" value="Ensembl"/>
</dbReference>
<dbReference type="GO" id="GO:0005654">
    <property type="term" value="C:nucleoplasm"/>
    <property type="evidence" value="ECO:0007669"/>
    <property type="project" value="Ensembl"/>
</dbReference>
<dbReference type="GO" id="GO:0005634">
    <property type="term" value="C:nucleus"/>
    <property type="evidence" value="ECO:0000250"/>
    <property type="project" value="UniProtKB"/>
</dbReference>
<dbReference type="GO" id="GO:0072669">
    <property type="term" value="C:tRNA-splicing ligase complex"/>
    <property type="evidence" value="ECO:0000250"/>
    <property type="project" value="UniProtKB"/>
</dbReference>
<dbReference type="GO" id="GO:0005525">
    <property type="term" value="F:GTP binding"/>
    <property type="evidence" value="ECO:0007669"/>
    <property type="project" value="UniProtKB-KW"/>
</dbReference>
<dbReference type="GO" id="GO:0046872">
    <property type="term" value="F:metal ion binding"/>
    <property type="evidence" value="ECO:0007669"/>
    <property type="project" value="UniProtKB-KW"/>
</dbReference>
<dbReference type="GO" id="GO:0003972">
    <property type="term" value="F:RNA ligase (ATP) activity"/>
    <property type="evidence" value="ECO:0007669"/>
    <property type="project" value="TreeGrafter"/>
</dbReference>
<dbReference type="GO" id="GO:0170057">
    <property type="term" value="F:RNA ligase (GTP) activity"/>
    <property type="evidence" value="ECO:0000250"/>
    <property type="project" value="UniProtKB"/>
</dbReference>
<dbReference type="GO" id="GO:0017166">
    <property type="term" value="F:vinculin binding"/>
    <property type="evidence" value="ECO:0007669"/>
    <property type="project" value="Ensembl"/>
</dbReference>
<dbReference type="GO" id="GO:0006388">
    <property type="term" value="P:tRNA splicing, via endonucleolytic cleavage and ligation"/>
    <property type="evidence" value="ECO:0000250"/>
    <property type="project" value="UniProtKB"/>
</dbReference>
<dbReference type="FunFam" id="3.90.1860.10:FF:000001">
    <property type="entry name" value="tRNA-splicing ligase RtcB homolog"/>
    <property type="match status" value="1"/>
</dbReference>
<dbReference type="Gene3D" id="3.90.1860.10">
    <property type="entry name" value="tRNA-splicing ligase RtcB"/>
    <property type="match status" value="1"/>
</dbReference>
<dbReference type="HAMAP" id="MF_03144">
    <property type="entry name" value="RtcB_euk"/>
    <property type="match status" value="1"/>
</dbReference>
<dbReference type="InterPro" id="IPR001233">
    <property type="entry name" value="RtcB"/>
</dbReference>
<dbReference type="InterPro" id="IPR036025">
    <property type="entry name" value="RtcB-like_sf"/>
</dbReference>
<dbReference type="InterPro" id="IPR027513">
    <property type="entry name" value="RtcB_euk"/>
</dbReference>
<dbReference type="PANTHER" id="PTHR11118">
    <property type="entry name" value="RNA-SPLICING LIGASE RTCB HOMOLOG"/>
    <property type="match status" value="1"/>
</dbReference>
<dbReference type="PANTHER" id="PTHR11118:SF1">
    <property type="entry name" value="RNA-SPLICING LIGASE RTCB HOMOLOG"/>
    <property type="match status" value="1"/>
</dbReference>
<dbReference type="Pfam" id="PF01139">
    <property type="entry name" value="RtcB"/>
    <property type="match status" value="1"/>
</dbReference>
<dbReference type="SUPFAM" id="SSF103365">
    <property type="entry name" value="Hypothetical protein PH1602"/>
    <property type="match status" value="1"/>
</dbReference>
<dbReference type="PROSITE" id="PS01288">
    <property type="entry name" value="UPF0027"/>
    <property type="match status" value="1"/>
</dbReference>
<reference key="1">
    <citation type="submission" date="2005-06" db="EMBL/GenBank/DDBJ databases">
        <title>DNA sequences of macaque genes expressed in brain or testis and its evolutionary implications.</title>
        <authorList>
            <consortium name="International consortium for macaque cDNA sequencing and analysis"/>
        </authorList>
    </citation>
    <scope>NUCLEOTIDE SEQUENCE [LARGE SCALE MRNA]</scope>
    <source>
        <tissue>Testis</tissue>
    </source>
</reference>
<name>RTCB_MACFA</name>
<comment type="function">
    <text evidence="3">Catalytic subunit of the tRNA-splicing ligase complex that acts by directly joining spliced tRNA halves to mature-sized tRNAs by incorporating the precursor-derived splice junction phosphate into the mature tRNA as a canonical 3',5'-phosphodiester. May act as an RNA ligase with broad substrate specificity, and may function toward other RNAs.</text>
</comment>
<comment type="catalytic activity">
    <reaction evidence="3">
        <text>a 3'-end 3'-phospho-ribonucleotide-RNA + a 5'-end dephospho-ribonucleoside-RNA + GTP = a ribonucleotidyl-ribonucleotide-RNA + GMP + diphosphate</text>
        <dbReference type="Rhea" id="RHEA:68076"/>
        <dbReference type="Rhea" id="RHEA-COMP:10463"/>
        <dbReference type="Rhea" id="RHEA-COMP:13936"/>
        <dbReference type="Rhea" id="RHEA-COMP:17355"/>
        <dbReference type="ChEBI" id="CHEBI:33019"/>
        <dbReference type="ChEBI" id="CHEBI:37565"/>
        <dbReference type="ChEBI" id="CHEBI:58115"/>
        <dbReference type="ChEBI" id="CHEBI:83062"/>
        <dbReference type="ChEBI" id="CHEBI:138284"/>
        <dbReference type="ChEBI" id="CHEBI:173118"/>
        <dbReference type="EC" id="6.5.1.8"/>
    </reaction>
</comment>
<comment type="catalytic activity">
    <reaction evidence="3">
        <text>a 3'-end 2',3'-cyclophospho-ribonucleotide-RNA + a 5'-end dephospho-ribonucleoside-RNA + GTP + H2O = a ribonucleotidyl-ribonucleotide-RNA + GMP + diphosphate + H(+)</text>
        <dbReference type="Rhea" id="RHEA:68080"/>
        <dbReference type="Rhea" id="RHEA-COMP:10464"/>
        <dbReference type="Rhea" id="RHEA-COMP:13936"/>
        <dbReference type="Rhea" id="RHEA-COMP:17355"/>
        <dbReference type="ChEBI" id="CHEBI:15377"/>
        <dbReference type="ChEBI" id="CHEBI:15378"/>
        <dbReference type="ChEBI" id="CHEBI:33019"/>
        <dbReference type="ChEBI" id="CHEBI:37565"/>
        <dbReference type="ChEBI" id="CHEBI:58115"/>
        <dbReference type="ChEBI" id="CHEBI:83064"/>
        <dbReference type="ChEBI" id="CHEBI:138284"/>
        <dbReference type="ChEBI" id="CHEBI:173118"/>
        <dbReference type="EC" id="6.5.1.8"/>
    </reaction>
</comment>
<comment type="cofactor">
    <cofactor evidence="3">
        <name>Mn(2+)</name>
        <dbReference type="ChEBI" id="CHEBI:29035"/>
    </cofactor>
    <text evidence="3">Binds 2 manganese ions per subunit.</text>
</comment>
<comment type="subunit">
    <text evidence="3">Catalytic component of the tRNA-splicing ligase complex.</text>
</comment>
<comment type="subcellular location">
    <subcellularLocation>
        <location evidence="1">Nucleus</location>
    </subcellularLocation>
    <subcellularLocation>
        <location evidence="3">Cytoplasm</location>
    </subcellularLocation>
    <text evidence="1">Enters into the nucleus in case of active transcription while it accumulates in cytosol when transcription level is low.</text>
</comment>
<comment type="miscellaneous">
    <text evidence="3">Ligation probably proceeds through 3 nucleotidyl transfer steps, with 2',3'-cyclic phosphate termini being hydrolyzed to 3'-P termini in a step that precedes 3'-P activation with GMP. In the first nucleotidyl transfer step, RTCB reacts with GTP to form a covalent RTCB-histidine-GMP intermediate with release of PPi; in the second step, the GMP moiety is transferred to the RNA 3'-P; in the third step, the 5'-OH from the opposite RNA strand attacks the activated 3'-P to form a 3',5'-phosphodiester bond and release GMP.</text>
</comment>
<comment type="similarity">
    <text evidence="3">Belongs to the RtcB family.</text>
</comment>
<organism>
    <name type="scientific">Macaca fascicularis</name>
    <name type="common">Crab-eating macaque</name>
    <name type="synonym">Cynomolgus monkey</name>
    <dbReference type="NCBI Taxonomy" id="9541"/>
    <lineage>
        <taxon>Eukaryota</taxon>
        <taxon>Metazoa</taxon>
        <taxon>Chordata</taxon>
        <taxon>Craniata</taxon>
        <taxon>Vertebrata</taxon>
        <taxon>Euteleostomi</taxon>
        <taxon>Mammalia</taxon>
        <taxon>Eutheria</taxon>
        <taxon>Euarchontoglires</taxon>
        <taxon>Primates</taxon>
        <taxon>Haplorrhini</taxon>
        <taxon>Catarrhini</taxon>
        <taxon>Cercopithecidae</taxon>
        <taxon>Cercopithecinae</taxon>
        <taxon>Macaca</taxon>
    </lineage>
</organism>